<proteinExistence type="inferred from homology"/>
<name>RUVA_WOLPM</name>
<dbReference type="EMBL" id="AE017196">
    <property type="protein sequence ID" value="AAS14767.1"/>
    <property type="molecule type" value="Genomic_DNA"/>
</dbReference>
<dbReference type="RefSeq" id="WP_010082382.1">
    <property type="nucleotide sequence ID" value="NZ_OX384529.1"/>
</dbReference>
<dbReference type="SMR" id="Q73G51"/>
<dbReference type="EnsemblBacteria" id="AAS14767">
    <property type="protein sequence ID" value="AAS14767"/>
    <property type="gene ID" value="WD_1113"/>
</dbReference>
<dbReference type="GeneID" id="70036585"/>
<dbReference type="KEGG" id="wol:WD_1113"/>
<dbReference type="eggNOG" id="COG0632">
    <property type="taxonomic scope" value="Bacteria"/>
</dbReference>
<dbReference type="Proteomes" id="UP000008215">
    <property type="component" value="Chromosome"/>
</dbReference>
<dbReference type="GO" id="GO:0005737">
    <property type="term" value="C:cytoplasm"/>
    <property type="evidence" value="ECO:0007669"/>
    <property type="project" value="UniProtKB-SubCell"/>
</dbReference>
<dbReference type="GO" id="GO:0009379">
    <property type="term" value="C:Holliday junction helicase complex"/>
    <property type="evidence" value="ECO:0007669"/>
    <property type="project" value="InterPro"/>
</dbReference>
<dbReference type="GO" id="GO:0048476">
    <property type="term" value="C:Holliday junction resolvase complex"/>
    <property type="evidence" value="ECO:0007669"/>
    <property type="project" value="UniProtKB-UniRule"/>
</dbReference>
<dbReference type="GO" id="GO:0005524">
    <property type="term" value="F:ATP binding"/>
    <property type="evidence" value="ECO:0007669"/>
    <property type="project" value="InterPro"/>
</dbReference>
<dbReference type="GO" id="GO:0000400">
    <property type="term" value="F:four-way junction DNA binding"/>
    <property type="evidence" value="ECO:0007669"/>
    <property type="project" value="UniProtKB-UniRule"/>
</dbReference>
<dbReference type="GO" id="GO:0009378">
    <property type="term" value="F:four-way junction helicase activity"/>
    <property type="evidence" value="ECO:0007669"/>
    <property type="project" value="InterPro"/>
</dbReference>
<dbReference type="GO" id="GO:0006310">
    <property type="term" value="P:DNA recombination"/>
    <property type="evidence" value="ECO:0007669"/>
    <property type="project" value="UniProtKB-UniRule"/>
</dbReference>
<dbReference type="GO" id="GO:0006281">
    <property type="term" value="P:DNA repair"/>
    <property type="evidence" value="ECO:0007669"/>
    <property type="project" value="UniProtKB-UniRule"/>
</dbReference>
<dbReference type="CDD" id="cd14332">
    <property type="entry name" value="UBA_RuvA_C"/>
    <property type="match status" value="1"/>
</dbReference>
<dbReference type="Gene3D" id="1.10.150.20">
    <property type="entry name" value="5' to 3' exonuclease, C-terminal subdomain"/>
    <property type="match status" value="1"/>
</dbReference>
<dbReference type="Gene3D" id="1.10.8.10">
    <property type="entry name" value="DNA helicase RuvA subunit, C-terminal domain"/>
    <property type="match status" value="1"/>
</dbReference>
<dbReference type="Gene3D" id="2.40.50.140">
    <property type="entry name" value="Nucleic acid-binding proteins"/>
    <property type="match status" value="1"/>
</dbReference>
<dbReference type="HAMAP" id="MF_00031">
    <property type="entry name" value="DNA_HJ_migration_RuvA"/>
    <property type="match status" value="1"/>
</dbReference>
<dbReference type="InterPro" id="IPR013849">
    <property type="entry name" value="DNA_helicase_Holl-junc_RuvA_I"/>
</dbReference>
<dbReference type="InterPro" id="IPR012340">
    <property type="entry name" value="NA-bd_OB-fold"/>
</dbReference>
<dbReference type="InterPro" id="IPR000085">
    <property type="entry name" value="RuvA"/>
</dbReference>
<dbReference type="InterPro" id="IPR010994">
    <property type="entry name" value="RuvA_2-like"/>
</dbReference>
<dbReference type="InterPro" id="IPR011114">
    <property type="entry name" value="RuvA_C"/>
</dbReference>
<dbReference type="InterPro" id="IPR036267">
    <property type="entry name" value="RuvA_C_sf"/>
</dbReference>
<dbReference type="NCBIfam" id="NF011194">
    <property type="entry name" value="PRK14600.1"/>
    <property type="match status" value="1"/>
</dbReference>
<dbReference type="NCBIfam" id="TIGR00084">
    <property type="entry name" value="ruvA"/>
    <property type="match status" value="1"/>
</dbReference>
<dbReference type="Pfam" id="PF14520">
    <property type="entry name" value="HHH_5"/>
    <property type="match status" value="1"/>
</dbReference>
<dbReference type="Pfam" id="PF07499">
    <property type="entry name" value="RuvA_C"/>
    <property type="match status" value="1"/>
</dbReference>
<dbReference type="Pfam" id="PF01330">
    <property type="entry name" value="RuvA_N"/>
    <property type="match status" value="1"/>
</dbReference>
<dbReference type="SUPFAM" id="SSF46929">
    <property type="entry name" value="DNA helicase RuvA subunit, C-terminal domain"/>
    <property type="match status" value="1"/>
</dbReference>
<dbReference type="SUPFAM" id="SSF50249">
    <property type="entry name" value="Nucleic acid-binding proteins"/>
    <property type="match status" value="1"/>
</dbReference>
<dbReference type="SUPFAM" id="SSF47781">
    <property type="entry name" value="RuvA domain 2-like"/>
    <property type="match status" value="1"/>
</dbReference>
<keyword id="KW-0963">Cytoplasm</keyword>
<keyword id="KW-0227">DNA damage</keyword>
<keyword id="KW-0233">DNA recombination</keyword>
<keyword id="KW-0234">DNA repair</keyword>
<keyword id="KW-0238">DNA-binding</keyword>
<feature type="chain" id="PRO_1000195186" description="Holliday junction branch migration complex subunit RuvA">
    <location>
        <begin position="1"/>
        <end position="190"/>
    </location>
</feature>
<feature type="region of interest" description="Domain I" evidence="1">
    <location>
        <begin position="1"/>
        <end position="65"/>
    </location>
</feature>
<feature type="region of interest" description="Domain II" evidence="1">
    <location>
        <begin position="66"/>
        <end position="143"/>
    </location>
</feature>
<feature type="region of interest" description="Flexible linker" evidence="1">
    <location>
        <begin position="144"/>
        <end position="147"/>
    </location>
</feature>
<feature type="region of interest" description="Domain III" evidence="1">
    <location>
        <begin position="147"/>
        <end position="190"/>
    </location>
</feature>
<sequence>MIGNLSGIVDEVRSDHIILNVNDVGYMVYLSAKTLNACSIGSRVKLLIETYANNRENVAQLYGFISKEEQQCLRLLVKVSGVSYKTAMSILGKLTPEQLFLAIMNEDKVALKMSGLGLKLINRIITELSGKVSKLEINNNNFHPINEDALSALINLGYEKMKAYDTIKKYRPNLDTKDIIRMALKELSIL</sequence>
<accession>Q73G51</accession>
<organism>
    <name type="scientific">Wolbachia pipientis wMel</name>
    <dbReference type="NCBI Taxonomy" id="163164"/>
    <lineage>
        <taxon>Bacteria</taxon>
        <taxon>Pseudomonadati</taxon>
        <taxon>Pseudomonadota</taxon>
        <taxon>Alphaproteobacteria</taxon>
        <taxon>Rickettsiales</taxon>
        <taxon>Anaplasmataceae</taxon>
        <taxon>Wolbachieae</taxon>
        <taxon>Wolbachia</taxon>
    </lineage>
</organism>
<comment type="function">
    <text evidence="1">The RuvA-RuvB-RuvC complex processes Holliday junction (HJ) DNA during genetic recombination and DNA repair, while the RuvA-RuvB complex plays an important role in the rescue of blocked DNA replication forks via replication fork reversal (RFR). RuvA specifically binds to HJ cruciform DNA, conferring on it an open structure. The RuvB hexamer acts as an ATP-dependent pump, pulling dsDNA into and through the RuvAB complex. HJ branch migration allows RuvC to scan DNA until it finds its consensus sequence, where it cleaves and resolves the cruciform DNA.</text>
</comment>
<comment type="subunit">
    <text evidence="1">Homotetramer. Forms an RuvA(8)-RuvB(12)-Holliday junction (HJ) complex. HJ DNA is sandwiched between 2 RuvA tetramers; dsDNA enters through RuvA and exits via RuvB. An RuvB hexamer assembles on each DNA strand where it exits the tetramer. Each RuvB hexamer is contacted by two RuvA subunits (via domain III) on 2 adjacent RuvB subunits; this complex drives branch migration. In the full resolvosome a probable DNA-RuvA(4)-RuvB(12)-RuvC(2) complex forms which resolves the HJ.</text>
</comment>
<comment type="subcellular location">
    <subcellularLocation>
        <location evidence="1">Cytoplasm</location>
    </subcellularLocation>
</comment>
<comment type="domain">
    <text evidence="1">Has three domains with a flexible linker between the domains II and III and assumes an 'L' shape. Domain III is highly mobile and contacts RuvB.</text>
</comment>
<comment type="similarity">
    <text evidence="1">Belongs to the RuvA family.</text>
</comment>
<evidence type="ECO:0000255" key="1">
    <source>
        <dbReference type="HAMAP-Rule" id="MF_00031"/>
    </source>
</evidence>
<reference key="1">
    <citation type="journal article" date="2004" name="PLoS Biol.">
        <title>Phylogenomics of the reproductive parasite Wolbachia pipientis wMel: a streamlined genome overrun by mobile genetic elements.</title>
        <authorList>
            <person name="Wu M."/>
            <person name="Sun L.V."/>
            <person name="Vamathevan J.J."/>
            <person name="Riegler M."/>
            <person name="DeBoy R.T."/>
            <person name="Brownlie J.C."/>
            <person name="McGraw E.A."/>
            <person name="Martin W."/>
            <person name="Esser C."/>
            <person name="Ahmadinejad N."/>
            <person name="Wiegand C."/>
            <person name="Madupu R."/>
            <person name="Beanan M.J."/>
            <person name="Brinkac L.M."/>
            <person name="Daugherty S.C."/>
            <person name="Durkin A.S."/>
            <person name="Kolonay J.F."/>
            <person name="Nelson W.C."/>
            <person name="Mohamoud Y."/>
            <person name="Lee P."/>
            <person name="Berry K.J."/>
            <person name="Young M.B."/>
            <person name="Utterback T.R."/>
            <person name="Weidman J.F."/>
            <person name="Nierman W.C."/>
            <person name="Paulsen I.T."/>
            <person name="Nelson K.E."/>
            <person name="Tettelin H."/>
            <person name="O'Neill S.L."/>
            <person name="Eisen J.A."/>
        </authorList>
    </citation>
    <scope>NUCLEOTIDE SEQUENCE [LARGE SCALE GENOMIC DNA]</scope>
</reference>
<protein>
    <recommendedName>
        <fullName evidence="1">Holliday junction branch migration complex subunit RuvA</fullName>
    </recommendedName>
</protein>
<gene>
    <name evidence="1" type="primary">ruvA</name>
    <name type="ordered locus">WD_1113</name>
</gene>